<gene>
    <name type="ORF">AN1595</name>
    <name type="ORF">ANIA_01595</name>
</gene>
<organism>
    <name type="scientific">Emericella nidulans (strain FGSC A4 / ATCC 38163 / CBS 112.46 / NRRL 194 / M139)</name>
    <name type="common">Aspergillus nidulans</name>
    <dbReference type="NCBI Taxonomy" id="227321"/>
    <lineage>
        <taxon>Eukaryota</taxon>
        <taxon>Fungi</taxon>
        <taxon>Dikarya</taxon>
        <taxon>Ascomycota</taxon>
        <taxon>Pezizomycotina</taxon>
        <taxon>Eurotiomycetes</taxon>
        <taxon>Eurotiomycetidae</taxon>
        <taxon>Eurotiales</taxon>
        <taxon>Aspergillaceae</taxon>
        <taxon>Aspergillus</taxon>
        <taxon>Aspergillus subgen. Nidulantes</taxon>
    </lineage>
</organism>
<keyword id="KW-1185">Reference proteome</keyword>
<keyword id="KW-0808">Transferase</keyword>
<dbReference type="EC" id="2.5.1.-" evidence="8"/>
<dbReference type="EMBL" id="AACD01000025">
    <property type="protein sequence ID" value="EAA64302.1"/>
    <property type="molecule type" value="Genomic_DNA"/>
</dbReference>
<dbReference type="EMBL" id="BN001307">
    <property type="protein sequence ID" value="CBF85182.1"/>
    <property type="molecule type" value="Genomic_DNA"/>
</dbReference>
<dbReference type="RefSeq" id="XP_659199.1">
    <property type="nucleotide sequence ID" value="XM_654107.1"/>
</dbReference>
<dbReference type="SMR" id="A0A1U8QXK4"/>
<dbReference type="STRING" id="227321.Q5BCY5"/>
<dbReference type="EnsemblFungi" id="CBF85182">
    <property type="protein sequence ID" value="CBF85182"/>
    <property type="gene ID" value="ANIA_01595"/>
</dbReference>
<dbReference type="GeneID" id="2874629"/>
<dbReference type="KEGG" id="ani:ANIA_01595"/>
<dbReference type="VEuPathDB" id="FungiDB:AN1595"/>
<dbReference type="eggNOG" id="KOG0867">
    <property type="taxonomic scope" value="Eukaryota"/>
</dbReference>
<dbReference type="HOGENOM" id="CLU_011226_3_2_1"/>
<dbReference type="InParanoid" id="A0A1U8QXK4"/>
<dbReference type="OMA" id="VETYPHK"/>
<dbReference type="OrthoDB" id="249703at2759"/>
<dbReference type="UniPathway" id="UPA00213"/>
<dbReference type="Proteomes" id="UP000000560">
    <property type="component" value="Chromosome VII"/>
</dbReference>
<dbReference type="GO" id="GO:0005737">
    <property type="term" value="C:cytoplasm"/>
    <property type="evidence" value="ECO:0000318"/>
    <property type="project" value="GO_Central"/>
</dbReference>
<dbReference type="GO" id="GO:0005634">
    <property type="term" value="C:nucleus"/>
    <property type="evidence" value="ECO:0000318"/>
    <property type="project" value="GO_Central"/>
</dbReference>
<dbReference type="GO" id="GO:0016740">
    <property type="term" value="F:transferase activity"/>
    <property type="evidence" value="ECO:0007669"/>
    <property type="project" value="UniProtKB-KW"/>
</dbReference>
<dbReference type="GO" id="GO:0016114">
    <property type="term" value="P:terpenoid biosynthetic process"/>
    <property type="evidence" value="ECO:0007669"/>
    <property type="project" value="UniProtKB-UniPathway"/>
</dbReference>
<dbReference type="CDD" id="cd03181">
    <property type="entry name" value="GST_C_EF1Bgamma_like"/>
    <property type="match status" value="1"/>
</dbReference>
<dbReference type="CDD" id="cd03044">
    <property type="entry name" value="GST_N_EF1Bgamma"/>
    <property type="match status" value="1"/>
</dbReference>
<dbReference type="FunFam" id="1.20.1050.10:FF:000006">
    <property type="entry name" value="Elongation factor 1 gamma"/>
    <property type="match status" value="1"/>
</dbReference>
<dbReference type="FunFam" id="3.40.30.10:FF:000142">
    <property type="entry name" value="Elongation factor 1 gamma"/>
    <property type="match status" value="1"/>
</dbReference>
<dbReference type="Gene3D" id="1.20.1050.10">
    <property type="match status" value="1"/>
</dbReference>
<dbReference type="Gene3D" id="3.40.30.10">
    <property type="entry name" value="Glutaredoxin"/>
    <property type="match status" value="1"/>
</dbReference>
<dbReference type="InterPro" id="IPR050802">
    <property type="entry name" value="EF-GSTs"/>
</dbReference>
<dbReference type="InterPro" id="IPR010987">
    <property type="entry name" value="Glutathione-S-Trfase_C-like"/>
</dbReference>
<dbReference type="InterPro" id="IPR036282">
    <property type="entry name" value="Glutathione-S-Trfase_C_sf"/>
</dbReference>
<dbReference type="InterPro" id="IPR040079">
    <property type="entry name" value="Glutathione_S-Trfase"/>
</dbReference>
<dbReference type="InterPro" id="IPR004045">
    <property type="entry name" value="Glutathione_S-Trfase_N"/>
</dbReference>
<dbReference type="InterPro" id="IPR004046">
    <property type="entry name" value="GST_C"/>
</dbReference>
<dbReference type="InterPro" id="IPR036249">
    <property type="entry name" value="Thioredoxin-like_sf"/>
</dbReference>
<dbReference type="PANTHER" id="PTHR43986">
    <property type="entry name" value="ELONGATION FACTOR 1-GAMMA"/>
    <property type="match status" value="1"/>
</dbReference>
<dbReference type="PANTHER" id="PTHR43986:SF1">
    <property type="entry name" value="ELONGATION FACTOR 1-GAMMA"/>
    <property type="match status" value="1"/>
</dbReference>
<dbReference type="Pfam" id="PF00043">
    <property type="entry name" value="GST_C"/>
    <property type="match status" value="1"/>
</dbReference>
<dbReference type="Pfam" id="PF02798">
    <property type="entry name" value="GST_N"/>
    <property type="match status" value="1"/>
</dbReference>
<dbReference type="SFLD" id="SFLDS00019">
    <property type="entry name" value="Glutathione_Transferase_(cytos"/>
    <property type="match status" value="1"/>
</dbReference>
<dbReference type="SFLD" id="SFLDG00358">
    <property type="entry name" value="Main_(cytGST)"/>
    <property type="match status" value="1"/>
</dbReference>
<dbReference type="SUPFAM" id="SSF47616">
    <property type="entry name" value="GST C-terminal domain-like"/>
    <property type="match status" value="1"/>
</dbReference>
<dbReference type="SUPFAM" id="SSF52833">
    <property type="entry name" value="Thioredoxin-like"/>
    <property type="match status" value="1"/>
</dbReference>
<dbReference type="PROSITE" id="PS50405">
    <property type="entry name" value="GST_CTER"/>
    <property type="match status" value="1"/>
</dbReference>
<dbReference type="PROSITE" id="PS50404">
    <property type="entry name" value="GST_NTER"/>
    <property type="match status" value="1"/>
</dbReference>
<comment type="function">
    <text evidence="4 5 8">Glutathione S-transferase; part of the gene cluster that mediates the biosynthesis of the diterpene ent-pimara-8(14),15-diene (PD) (PubMed:22506079, PubMed:27098256). Within the cluster, the HMG-CoA reductase AN1593 functions in the mevalonate pathway, which produces isoprenoid precursors (PubMed:22506079, PubMed:27098256). The geranylgeranyl pyrophosphate (GGPP) synthase AN1592 is needed in the formation of GGPP, the precursor for diterpenes (PubMed:22506079, PubMed:27098256). Lastly, the pimaradiene synthase pbcA performs the 2 cyclization steps that convert GGPP to ent-pimara-8(14),15-diene (PubMed:22506079, PubMed:27098256). The putative roles of the remaining cluster enzymes in ent-pimara-8(14),15-diene biosynthesis is unclear (Probable). The cytochrome P450 monooxygenase AN1598, the glutathione S-transferase AN1595, the oxidoreductases AN1596 and AN1597 probably function as decorative enzymes (Probable). It is possible that in biological conditions the compound is oxidized to ent-pimara-8(14),15-dien-19-oic acid, which is a bioactive diterpene compound predominant in many plant extracts (Probable).</text>
</comment>
<comment type="pathway">
    <text evidence="8">Secondary metabolite biosynthesis; terpenoid biosynthesis.</text>
</comment>
<comment type="induction">
    <text evidence="4">Expression is positively regulated by the cluster-specific transcription factor pbcR.</text>
</comment>
<comment type="similarity">
    <text evidence="7">Belongs to the GST superfamily.</text>
</comment>
<sequence length="266" mass="29717">MNTLNAPRNPTRHPAMTADTLVDAPALPHQNGSTEEKLKERGSFGKLYTYKRSPRALGIQAVAKSIGLELEQVELQPANGVPDFYWNLNPLGKTPTFVGADGLVLTECMAIALHVTNEDSTTTLLGSSSLDFVQIIRWISFTNTDVVTRMASWVRPLIGYTPYSKEEVLKAQQQTTQAIGVFEDSLRDRKYLVGDRLTLADIMCVSLVSFGFAQIFDKEWREAFPYFSGWYMMVMHLPIMKAVVEEVPFVEEGLPNAPPTEPFRAP</sequence>
<feature type="chain" id="PRO_0000450842" description="Glutathione S-transferase AN1595">
    <location>
        <begin position="1"/>
        <end position="266"/>
    </location>
</feature>
<feature type="domain" description="GST N-terminal" evidence="2">
    <location>
        <begin position="43"/>
        <end position="123"/>
    </location>
</feature>
<feature type="domain" description="GST C-terminal" evidence="3">
    <location>
        <begin position="128"/>
        <end position="259"/>
    </location>
</feature>
<feature type="binding site" evidence="1">
    <location>
        <position position="93"/>
    </location>
    <ligand>
        <name>glutathione</name>
        <dbReference type="ChEBI" id="CHEBI:57925"/>
    </ligand>
</feature>
<feature type="binding site" evidence="1">
    <location>
        <position position="93"/>
    </location>
    <ligand>
        <name>substrate</name>
    </ligand>
</feature>
<feature type="binding site" evidence="1">
    <location>
        <position position="107"/>
    </location>
    <ligand>
        <name>glutathione</name>
        <dbReference type="ChEBI" id="CHEBI:57925"/>
    </ligand>
</feature>
<feature type="binding site" evidence="1">
    <location>
        <position position="108"/>
    </location>
    <ligand>
        <name>glutathione</name>
        <dbReference type="ChEBI" id="CHEBI:57925"/>
    </ligand>
</feature>
<feature type="binding site" evidence="1">
    <location>
        <position position="143"/>
    </location>
    <ligand>
        <name>glutathione</name>
        <dbReference type="ChEBI" id="CHEBI:57925"/>
    </ligand>
</feature>
<protein>
    <recommendedName>
        <fullName evidence="6">Glutathione S-transferase AN1595</fullName>
        <ecNumber evidence="8">2.5.1.-</ecNumber>
    </recommendedName>
    <alternativeName>
        <fullName evidence="6">Pimaradiene biosynthesis cluster protein AN1595</fullName>
    </alternativeName>
</protein>
<accession>A0A1U8QXK4</accession>
<accession>C8VN88</accession>
<accession>Q5BCY5</accession>
<evidence type="ECO:0000250" key="1">
    <source>
        <dbReference type="UniProtKB" id="Q4WB03"/>
    </source>
</evidence>
<evidence type="ECO:0000255" key="2">
    <source>
        <dbReference type="PROSITE-ProRule" id="PRU00684"/>
    </source>
</evidence>
<evidence type="ECO:0000255" key="3">
    <source>
        <dbReference type="PROSITE-ProRule" id="PRU00685"/>
    </source>
</evidence>
<evidence type="ECO:0000269" key="4">
    <source>
    </source>
</evidence>
<evidence type="ECO:0000269" key="5">
    <source>
    </source>
</evidence>
<evidence type="ECO:0000303" key="6">
    <source>
    </source>
</evidence>
<evidence type="ECO:0000305" key="7"/>
<evidence type="ECO:0000305" key="8">
    <source>
    </source>
</evidence>
<proteinExistence type="evidence at transcript level"/>
<reference key="1">
    <citation type="journal article" date="2005" name="Nature">
        <title>Sequencing of Aspergillus nidulans and comparative analysis with A. fumigatus and A. oryzae.</title>
        <authorList>
            <person name="Galagan J.E."/>
            <person name="Calvo S.E."/>
            <person name="Cuomo C."/>
            <person name="Ma L.-J."/>
            <person name="Wortman J.R."/>
            <person name="Batzoglou S."/>
            <person name="Lee S.-I."/>
            <person name="Bastuerkmen M."/>
            <person name="Spevak C.C."/>
            <person name="Clutterbuck J."/>
            <person name="Kapitonov V."/>
            <person name="Jurka J."/>
            <person name="Scazzocchio C."/>
            <person name="Farman M.L."/>
            <person name="Butler J."/>
            <person name="Purcell S."/>
            <person name="Harris S."/>
            <person name="Braus G.H."/>
            <person name="Draht O."/>
            <person name="Busch S."/>
            <person name="D'Enfert C."/>
            <person name="Bouchier C."/>
            <person name="Goldman G.H."/>
            <person name="Bell-Pedersen D."/>
            <person name="Griffiths-Jones S."/>
            <person name="Doonan J.H."/>
            <person name="Yu J."/>
            <person name="Vienken K."/>
            <person name="Pain A."/>
            <person name="Freitag M."/>
            <person name="Selker E.U."/>
            <person name="Archer D.B."/>
            <person name="Penalva M.A."/>
            <person name="Oakley B.R."/>
            <person name="Momany M."/>
            <person name="Tanaka T."/>
            <person name="Kumagai T."/>
            <person name="Asai K."/>
            <person name="Machida M."/>
            <person name="Nierman W.C."/>
            <person name="Denning D.W."/>
            <person name="Caddick M.X."/>
            <person name="Hynes M."/>
            <person name="Paoletti M."/>
            <person name="Fischer R."/>
            <person name="Miller B.L."/>
            <person name="Dyer P.S."/>
            <person name="Sachs M.S."/>
            <person name="Osmani S.A."/>
            <person name="Birren B.W."/>
        </authorList>
    </citation>
    <scope>NUCLEOTIDE SEQUENCE [LARGE SCALE GENOMIC DNA]</scope>
    <source>
        <strain>FGSC A4 / ATCC 38163 / CBS 112.46 / NRRL 194 / M139</strain>
    </source>
</reference>
<reference key="2">
    <citation type="journal article" date="2009" name="Fungal Genet. Biol.">
        <title>The 2008 update of the Aspergillus nidulans genome annotation: a community effort.</title>
        <authorList>
            <person name="Wortman J.R."/>
            <person name="Gilsenan J.M."/>
            <person name="Joardar V."/>
            <person name="Deegan J."/>
            <person name="Clutterbuck J."/>
            <person name="Andersen M.R."/>
            <person name="Archer D."/>
            <person name="Bencina M."/>
            <person name="Braus G."/>
            <person name="Coutinho P."/>
            <person name="von Dohren H."/>
            <person name="Doonan J."/>
            <person name="Driessen A.J."/>
            <person name="Durek P."/>
            <person name="Espeso E."/>
            <person name="Fekete E."/>
            <person name="Flipphi M."/>
            <person name="Estrada C.G."/>
            <person name="Geysens S."/>
            <person name="Goldman G."/>
            <person name="de Groot P.W."/>
            <person name="Hansen K."/>
            <person name="Harris S.D."/>
            <person name="Heinekamp T."/>
            <person name="Helmstaedt K."/>
            <person name="Henrissat B."/>
            <person name="Hofmann G."/>
            <person name="Homan T."/>
            <person name="Horio T."/>
            <person name="Horiuchi H."/>
            <person name="James S."/>
            <person name="Jones M."/>
            <person name="Karaffa L."/>
            <person name="Karanyi Z."/>
            <person name="Kato M."/>
            <person name="Keller N."/>
            <person name="Kelly D.E."/>
            <person name="Kiel J.A."/>
            <person name="Kim J.M."/>
            <person name="van der Klei I.J."/>
            <person name="Klis F.M."/>
            <person name="Kovalchuk A."/>
            <person name="Krasevec N."/>
            <person name="Kubicek C.P."/>
            <person name="Liu B."/>
            <person name="Maccabe A."/>
            <person name="Meyer V."/>
            <person name="Mirabito P."/>
            <person name="Miskei M."/>
            <person name="Mos M."/>
            <person name="Mullins J."/>
            <person name="Nelson D.R."/>
            <person name="Nielsen J."/>
            <person name="Oakley B.R."/>
            <person name="Osmani S.A."/>
            <person name="Pakula T."/>
            <person name="Paszewski A."/>
            <person name="Paulsen I."/>
            <person name="Pilsyk S."/>
            <person name="Pocsi I."/>
            <person name="Punt P.J."/>
            <person name="Ram A.F."/>
            <person name="Ren Q."/>
            <person name="Robellet X."/>
            <person name="Robson G."/>
            <person name="Seiboth B."/>
            <person name="van Solingen P."/>
            <person name="Specht T."/>
            <person name="Sun J."/>
            <person name="Taheri-Talesh N."/>
            <person name="Takeshita N."/>
            <person name="Ussery D."/>
            <person name="vanKuyk P.A."/>
            <person name="Visser H."/>
            <person name="van de Vondervoort P.J."/>
            <person name="de Vries R.P."/>
            <person name="Walton J."/>
            <person name="Xiang X."/>
            <person name="Xiong Y."/>
            <person name="Zeng A.P."/>
            <person name="Brandt B.W."/>
            <person name="Cornell M.J."/>
            <person name="van den Hondel C.A."/>
            <person name="Visser J."/>
            <person name="Oliver S.G."/>
            <person name="Turner G."/>
        </authorList>
    </citation>
    <scope>GENOME REANNOTATION</scope>
    <source>
        <strain>FGSC A4 / ATCC 38163 / CBS 112.46 / NRRL 194 / M139</strain>
    </source>
</reference>
<reference key="3">
    <citation type="journal article" date="2012" name="PLoS ONE">
        <title>Identification and characterization of a novel diterpene gene cluster in Aspergillus nidulans.</title>
        <authorList>
            <person name="Bromann K."/>
            <person name="Toivari M."/>
            <person name="Viljanen K."/>
            <person name="Vuoristo A."/>
            <person name="Ruohonen L."/>
            <person name="Nakari-Setaelae T."/>
        </authorList>
    </citation>
    <scope>FUNCTION</scope>
    <scope>INDUCTION</scope>
    <scope>PATHWAY</scope>
</reference>
<reference key="4">
    <citation type="journal article" date="2016" name="Appl. Microbiol. Biotechnol.">
        <title>Engineering Aspergillus nidulans for heterologous ent-kaurene and gamma-terpinene production.</title>
        <authorList>
            <person name="Bromann K."/>
            <person name="Toivari M."/>
            <person name="Viljanen K."/>
            <person name="Ruohonen L."/>
            <person name="Nakari-Setaelae T."/>
        </authorList>
    </citation>
    <scope>FUNCTION</scope>
</reference>
<name>PBCD_EMENI</name>